<gene>
    <name type="primary">ALIS4</name>
    <name type="ordered locus">At1g16360</name>
    <name type="ORF">F3O9.16</name>
</gene>
<protein>
    <recommendedName>
        <fullName>Putative ALA-interacting subunit 4</fullName>
        <shortName>AtALIS4</shortName>
    </recommendedName>
</protein>
<name>ALIS4_ARATH</name>
<reference key="1">
    <citation type="journal article" date="2000" name="Nature">
        <title>Sequence and analysis of chromosome 1 of the plant Arabidopsis thaliana.</title>
        <authorList>
            <person name="Theologis A."/>
            <person name="Ecker J.R."/>
            <person name="Palm C.J."/>
            <person name="Federspiel N.A."/>
            <person name="Kaul S."/>
            <person name="White O."/>
            <person name="Alonso J."/>
            <person name="Altafi H."/>
            <person name="Araujo R."/>
            <person name="Bowman C.L."/>
            <person name="Brooks S.Y."/>
            <person name="Buehler E."/>
            <person name="Chan A."/>
            <person name="Chao Q."/>
            <person name="Chen H."/>
            <person name="Cheuk R.F."/>
            <person name="Chin C.W."/>
            <person name="Chung M.K."/>
            <person name="Conn L."/>
            <person name="Conway A.B."/>
            <person name="Conway A.R."/>
            <person name="Creasy T.H."/>
            <person name="Dewar K."/>
            <person name="Dunn P."/>
            <person name="Etgu P."/>
            <person name="Feldblyum T.V."/>
            <person name="Feng J.-D."/>
            <person name="Fong B."/>
            <person name="Fujii C.Y."/>
            <person name="Gill J.E."/>
            <person name="Goldsmith A.D."/>
            <person name="Haas B."/>
            <person name="Hansen N.F."/>
            <person name="Hughes B."/>
            <person name="Huizar L."/>
            <person name="Hunter J.L."/>
            <person name="Jenkins J."/>
            <person name="Johnson-Hopson C."/>
            <person name="Khan S."/>
            <person name="Khaykin E."/>
            <person name="Kim C.J."/>
            <person name="Koo H.L."/>
            <person name="Kremenetskaia I."/>
            <person name="Kurtz D.B."/>
            <person name="Kwan A."/>
            <person name="Lam B."/>
            <person name="Langin-Hooper S."/>
            <person name="Lee A."/>
            <person name="Lee J.M."/>
            <person name="Lenz C.A."/>
            <person name="Li J.H."/>
            <person name="Li Y.-P."/>
            <person name="Lin X."/>
            <person name="Liu S.X."/>
            <person name="Liu Z.A."/>
            <person name="Luros J.S."/>
            <person name="Maiti R."/>
            <person name="Marziali A."/>
            <person name="Militscher J."/>
            <person name="Miranda M."/>
            <person name="Nguyen M."/>
            <person name="Nierman W.C."/>
            <person name="Osborne B.I."/>
            <person name="Pai G."/>
            <person name="Peterson J."/>
            <person name="Pham P.K."/>
            <person name="Rizzo M."/>
            <person name="Rooney T."/>
            <person name="Rowley D."/>
            <person name="Sakano H."/>
            <person name="Salzberg S.L."/>
            <person name="Schwartz J.R."/>
            <person name="Shinn P."/>
            <person name="Southwick A.M."/>
            <person name="Sun H."/>
            <person name="Tallon L.J."/>
            <person name="Tambunga G."/>
            <person name="Toriumi M.J."/>
            <person name="Town C.D."/>
            <person name="Utterback T."/>
            <person name="Van Aken S."/>
            <person name="Vaysberg M."/>
            <person name="Vysotskaia V.S."/>
            <person name="Walker M."/>
            <person name="Wu D."/>
            <person name="Yu G."/>
            <person name="Fraser C.M."/>
            <person name="Venter J.C."/>
            <person name="Davis R.W."/>
        </authorList>
    </citation>
    <scope>NUCLEOTIDE SEQUENCE [LARGE SCALE GENOMIC DNA]</scope>
    <source>
        <strain>cv. Columbia</strain>
    </source>
</reference>
<reference key="2">
    <citation type="journal article" date="2017" name="Plant J.">
        <title>Araport11: a complete reannotation of the Arabidopsis thaliana reference genome.</title>
        <authorList>
            <person name="Cheng C.Y."/>
            <person name="Krishnakumar V."/>
            <person name="Chan A.P."/>
            <person name="Thibaud-Nissen F."/>
            <person name="Schobel S."/>
            <person name="Town C.D."/>
        </authorList>
    </citation>
    <scope>GENOME REANNOTATION</scope>
    <source>
        <strain>cv. Columbia</strain>
    </source>
</reference>
<reference key="3">
    <citation type="submission" date="2004-09" db="EMBL/GenBank/DDBJ databases">
        <title>Large-scale analysis of RIKEN Arabidopsis full-length (RAFL) cDNAs.</title>
        <authorList>
            <person name="Totoki Y."/>
            <person name="Seki M."/>
            <person name="Ishida J."/>
            <person name="Nakajima M."/>
            <person name="Enju A."/>
            <person name="Kamiya A."/>
            <person name="Narusaka M."/>
            <person name="Shin-i T."/>
            <person name="Nakagawa M."/>
            <person name="Sakamoto N."/>
            <person name="Oishi K."/>
            <person name="Kohara Y."/>
            <person name="Kobayashi M."/>
            <person name="Toyoda A."/>
            <person name="Sakaki Y."/>
            <person name="Sakurai T."/>
            <person name="Iida K."/>
            <person name="Akiyama K."/>
            <person name="Satou M."/>
            <person name="Toyoda T."/>
            <person name="Konagaya A."/>
            <person name="Carninci P."/>
            <person name="Kawai J."/>
            <person name="Hayashizaki Y."/>
            <person name="Shinozaki K."/>
        </authorList>
    </citation>
    <scope>NUCLEOTIDE SEQUENCE [LARGE SCALE MRNA] OF 61-336</scope>
    <source>
        <strain>cv. Columbia</strain>
    </source>
</reference>
<reference key="4">
    <citation type="journal article" date="2008" name="Plant Cell">
        <title>The Arabidopsis P4-ATPase ALA3 localizes to the Golgi and requires a beta-subunit to function in lipid translocation and secretory vesicle formation.</title>
        <authorList>
            <person name="Poulsen L.R."/>
            <person name="Lopez-Marques R.L."/>
            <person name="McDowell S.C."/>
            <person name="Okkeri J."/>
            <person name="Licht D."/>
            <person name="Schulz A."/>
            <person name="Pomorski T."/>
            <person name="Harper J.F."/>
            <person name="Palmgren M.G."/>
        </authorList>
    </citation>
    <scope>NOMENCLATURE</scope>
    <scope>TISSUE SPECIFICITY</scope>
</reference>
<feature type="chain" id="PRO_0000366957" description="Putative ALA-interacting subunit 4">
    <location>
        <begin position="1"/>
        <end position="336"/>
    </location>
</feature>
<feature type="transmembrane region" description="Helical" evidence="1">
    <location>
        <begin position="36"/>
        <end position="56"/>
    </location>
</feature>
<feature type="transmembrane region" description="Helical" evidence="1">
    <location>
        <begin position="290"/>
        <end position="310"/>
    </location>
</feature>
<feature type="region of interest" description="Disordered" evidence="2">
    <location>
        <begin position="127"/>
        <end position="148"/>
    </location>
</feature>
<feature type="compositionally biased region" description="Basic and acidic residues" evidence="2">
    <location>
        <begin position="127"/>
        <end position="142"/>
    </location>
</feature>
<feature type="glycosylation site" description="N-linked (GlcNAc...) asparagine" evidence="1">
    <location>
        <position position="94"/>
    </location>
</feature>
<feature type="glycosylation site" description="N-linked (GlcNAc...) asparagine" evidence="1">
    <location>
        <position position="167"/>
    </location>
</feature>
<feature type="glycosylation site" description="N-linked (GlcNAc...) asparagine" evidence="1">
    <location>
        <position position="329"/>
    </location>
</feature>
<sequence>MSTKKHNLLANFASSDSRFTQQELPACKPILTPKWVILTFLVSGVVFIPLGVICLFASQGVIEIVDRYDTDCIPLSSRDNKVRYIQGLEDKRCNRTITVTKTMKNPVYVYYQLENYYQNHRRYVKSRQDGQLRSPKDEHETKSCAPEDTLGGQPIVPCGLVAWSLFNDTYDFTRNNQKLPVNKKDISWKSDRESKFGKNVFPKNFQKGSLIGGKSLDQDIPLSEQEDLIVWMRTAALPTFRKLYGKIDTDLQAGDTIKVLLQNNYNTYSFNGKKKLVLSTTSWLGGRNDFLGIAYLTVGSICLFLAVSFSVLYLAKPRQLGDPSYLSWNRSAGGGR</sequence>
<evidence type="ECO:0000255" key="1"/>
<evidence type="ECO:0000256" key="2">
    <source>
        <dbReference type="SAM" id="MobiDB-lite"/>
    </source>
</evidence>
<evidence type="ECO:0000269" key="3">
    <source>
    </source>
</evidence>
<evidence type="ECO:0000305" key="4"/>
<keyword id="KW-0325">Glycoprotein</keyword>
<keyword id="KW-0472">Membrane</keyword>
<keyword id="KW-1185">Reference proteome</keyword>
<keyword id="KW-0812">Transmembrane</keyword>
<keyword id="KW-1133">Transmembrane helix</keyword>
<organism>
    <name type="scientific">Arabidopsis thaliana</name>
    <name type="common">Mouse-ear cress</name>
    <dbReference type="NCBI Taxonomy" id="3702"/>
    <lineage>
        <taxon>Eukaryota</taxon>
        <taxon>Viridiplantae</taxon>
        <taxon>Streptophyta</taxon>
        <taxon>Embryophyta</taxon>
        <taxon>Tracheophyta</taxon>
        <taxon>Spermatophyta</taxon>
        <taxon>Magnoliopsida</taxon>
        <taxon>eudicotyledons</taxon>
        <taxon>Gunneridae</taxon>
        <taxon>Pentapetalae</taxon>
        <taxon>rosids</taxon>
        <taxon>malvids</taxon>
        <taxon>Brassicales</taxon>
        <taxon>Brassicaceae</taxon>
        <taxon>Camelineae</taxon>
        <taxon>Arabidopsis</taxon>
    </lineage>
</organism>
<accession>Q9SA35</accession>
<accession>F4I2W8</accession>
<accession>Q682N7</accession>
<dbReference type="EMBL" id="AC006341">
    <property type="protein sequence ID" value="AAD34688.1"/>
    <property type="status" value="ALT_SEQ"/>
    <property type="molecule type" value="Genomic_DNA"/>
</dbReference>
<dbReference type="EMBL" id="CP002684">
    <property type="protein sequence ID" value="AEE29442.1"/>
    <property type="molecule type" value="Genomic_DNA"/>
</dbReference>
<dbReference type="EMBL" id="AK175330">
    <property type="protein sequence ID" value="BAD43093.1"/>
    <property type="status" value="ALT_INIT"/>
    <property type="molecule type" value="mRNA"/>
</dbReference>
<dbReference type="PIR" id="G86298">
    <property type="entry name" value="G86298"/>
</dbReference>
<dbReference type="RefSeq" id="NP_173086.2">
    <property type="nucleotide sequence ID" value="NM_101502.3"/>
</dbReference>
<dbReference type="SMR" id="Q9SA35"/>
<dbReference type="FunCoup" id="Q9SA35">
    <property type="interactions" value="2455"/>
</dbReference>
<dbReference type="STRING" id="3702.Q9SA35"/>
<dbReference type="GlyCosmos" id="Q9SA35">
    <property type="glycosylation" value="3 sites, No reported glycans"/>
</dbReference>
<dbReference type="GlyGen" id="Q9SA35">
    <property type="glycosylation" value="3 sites"/>
</dbReference>
<dbReference type="PaxDb" id="3702-AT1G16360.1"/>
<dbReference type="EnsemblPlants" id="AT1G16360.1">
    <property type="protein sequence ID" value="AT1G16360.1"/>
    <property type="gene ID" value="AT1G16360"/>
</dbReference>
<dbReference type="GeneID" id="838205"/>
<dbReference type="Gramene" id="AT1G16360.1">
    <property type="protein sequence ID" value="AT1G16360.1"/>
    <property type="gene ID" value="AT1G16360"/>
</dbReference>
<dbReference type="KEGG" id="ath:AT1G16360"/>
<dbReference type="Araport" id="AT1G16360"/>
<dbReference type="TAIR" id="AT1G16360"/>
<dbReference type="eggNOG" id="KOG2952">
    <property type="taxonomic scope" value="Eukaryota"/>
</dbReference>
<dbReference type="HOGENOM" id="CLU_025025_1_1_1"/>
<dbReference type="InParanoid" id="Q9SA35"/>
<dbReference type="OMA" id="GIAYITM"/>
<dbReference type="OrthoDB" id="340608at2759"/>
<dbReference type="PRO" id="PR:Q9SA35"/>
<dbReference type="Proteomes" id="UP000006548">
    <property type="component" value="Chromosome 1"/>
</dbReference>
<dbReference type="ExpressionAtlas" id="Q9SA35">
    <property type="expression patterns" value="baseline and differential"/>
</dbReference>
<dbReference type="GO" id="GO:0016020">
    <property type="term" value="C:membrane"/>
    <property type="evidence" value="ECO:0007669"/>
    <property type="project" value="UniProtKB-SubCell"/>
</dbReference>
<dbReference type="GO" id="GO:0005634">
    <property type="term" value="C:nucleus"/>
    <property type="evidence" value="ECO:0007005"/>
    <property type="project" value="TAIR"/>
</dbReference>
<dbReference type="InterPro" id="IPR005045">
    <property type="entry name" value="CDC50/LEM3_fam"/>
</dbReference>
<dbReference type="PANTHER" id="PTHR10926:SF49">
    <property type="entry name" value="ALA-INTERACTING SUBUNIT 4-RELATED"/>
    <property type="match status" value="1"/>
</dbReference>
<dbReference type="PANTHER" id="PTHR10926">
    <property type="entry name" value="CELL CYCLE CONTROL PROTEIN 50"/>
    <property type="match status" value="1"/>
</dbReference>
<dbReference type="Pfam" id="PF03381">
    <property type="entry name" value="CDC50"/>
    <property type="match status" value="1"/>
</dbReference>
<dbReference type="PIRSF" id="PIRSF015840">
    <property type="entry name" value="DUF284_TM_euk"/>
    <property type="match status" value="1"/>
</dbReference>
<comment type="subcellular location">
    <subcellularLocation>
        <location evidence="4">Membrane</location>
        <topology evidence="4">Multi-pass membrane protein</topology>
    </subcellularLocation>
</comment>
<comment type="tissue specificity">
    <text evidence="3">Expressed in flowers. May be restricted to pollen grains.</text>
</comment>
<comment type="similarity">
    <text evidence="4">Belongs to the CDC50/LEM3 family.</text>
</comment>
<comment type="sequence caution" evidence="4">
    <conflict type="erroneous gene model prediction">
        <sequence resource="EMBL-CDS" id="AAD34688"/>
    </conflict>
</comment>
<comment type="sequence caution" evidence="4">
    <conflict type="erroneous initiation">
        <sequence resource="EMBL-CDS" id="BAD43093"/>
    </conflict>
    <text>Truncated N-terminus.</text>
</comment>
<proteinExistence type="evidence at transcript level"/>